<dbReference type="EC" id="6.2.1.26" evidence="1"/>
<dbReference type="EMBL" id="AE017355">
    <property type="protein sequence ID" value="AAT60993.1"/>
    <property type="molecule type" value="Genomic_DNA"/>
</dbReference>
<dbReference type="RefSeq" id="YP_038897.1">
    <property type="nucleotide sequence ID" value="NC_005957.1"/>
</dbReference>
<dbReference type="SMR" id="Q6HC29"/>
<dbReference type="KEGG" id="btk:BT9727_4585"/>
<dbReference type="PATRIC" id="fig|281309.8.peg.4883"/>
<dbReference type="HOGENOM" id="CLU_000022_59_0_9"/>
<dbReference type="UniPathway" id="UPA00079"/>
<dbReference type="UniPathway" id="UPA01057">
    <property type="reaction ID" value="UER00166"/>
</dbReference>
<dbReference type="Proteomes" id="UP000001301">
    <property type="component" value="Chromosome"/>
</dbReference>
<dbReference type="GO" id="GO:0005524">
    <property type="term" value="F:ATP binding"/>
    <property type="evidence" value="ECO:0007669"/>
    <property type="project" value="UniProtKB-KW"/>
</dbReference>
<dbReference type="GO" id="GO:0008756">
    <property type="term" value="F:o-succinylbenzoate-CoA ligase activity"/>
    <property type="evidence" value="ECO:0007669"/>
    <property type="project" value="UniProtKB-UniRule"/>
</dbReference>
<dbReference type="GO" id="GO:0009234">
    <property type="term" value="P:menaquinone biosynthetic process"/>
    <property type="evidence" value="ECO:0007669"/>
    <property type="project" value="UniProtKB-UniRule"/>
</dbReference>
<dbReference type="CDD" id="cd05912">
    <property type="entry name" value="OSB_CoA_lg"/>
    <property type="match status" value="1"/>
</dbReference>
<dbReference type="FunFam" id="3.30.300.30:FF:000008">
    <property type="entry name" value="2,3-dihydroxybenzoate-AMP ligase"/>
    <property type="match status" value="1"/>
</dbReference>
<dbReference type="Gene3D" id="3.30.300.30">
    <property type="match status" value="1"/>
</dbReference>
<dbReference type="Gene3D" id="3.40.50.12780">
    <property type="entry name" value="N-terminal domain of ligase-like"/>
    <property type="match status" value="1"/>
</dbReference>
<dbReference type="HAMAP" id="MF_00731">
    <property type="entry name" value="MenE"/>
    <property type="match status" value="1"/>
</dbReference>
<dbReference type="InterPro" id="IPR025110">
    <property type="entry name" value="AMP-bd_C"/>
</dbReference>
<dbReference type="InterPro" id="IPR045851">
    <property type="entry name" value="AMP-bd_C_sf"/>
</dbReference>
<dbReference type="InterPro" id="IPR020845">
    <property type="entry name" value="AMP-binding_CS"/>
</dbReference>
<dbReference type="InterPro" id="IPR000873">
    <property type="entry name" value="AMP-dep_synth/lig_dom"/>
</dbReference>
<dbReference type="InterPro" id="IPR042099">
    <property type="entry name" value="ANL_N_sf"/>
</dbReference>
<dbReference type="InterPro" id="IPR050237">
    <property type="entry name" value="ATP-dep_AMP-bd_enzyme"/>
</dbReference>
<dbReference type="InterPro" id="IPR010192">
    <property type="entry name" value="MenE"/>
</dbReference>
<dbReference type="NCBIfam" id="TIGR01923">
    <property type="entry name" value="menE"/>
    <property type="match status" value="1"/>
</dbReference>
<dbReference type="NCBIfam" id="NF002966">
    <property type="entry name" value="PRK03640.1"/>
    <property type="match status" value="1"/>
</dbReference>
<dbReference type="PANTHER" id="PTHR43767">
    <property type="entry name" value="LONG-CHAIN-FATTY-ACID--COA LIGASE"/>
    <property type="match status" value="1"/>
</dbReference>
<dbReference type="PANTHER" id="PTHR43767:SF1">
    <property type="entry name" value="NONRIBOSOMAL PEPTIDE SYNTHASE PES1 (EUROFUNG)-RELATED"/>
    <property type="match status" value="1"/>
</dbReference>
<dbReference type="Pfam" id="PF00501">
    <property type="entry name" value="AMP-binding"/>
    <property type="match status" value="1"/>
</dbReference>
<dbReference type="Pfam" id="PF13193">
    <property type="entry name" value="AMP-binding_C"/>
    <property type="match status" value="1"/>
</dbReference>
<dbReference type="SUPFAM" id="SSF56801">
    <property type="entry name" value="Acetyl-CoA synthetase-like"/>
    <property type="match status" value="1"/>
</dbReference>
<dbReference type="PROSITE" id="PS00455">
    <property type="entry name" value="AMP_BINDING"/>
    <property type="match status" value="1"/>
</dbReference>
<accession>Q6HC29</accession>
<protein>
    <recommendedName>
        <fullName evidence="1">2-succinylbenzoate--CoA ligase</fullName>
        <ecNumber evidence="1">6.2.1.26</ecNumber>
    </recommendedName>
    <alternativeName>
        <fullName evidence="1">o-succinylbenzoyl-CoA synthetase</fullName>
        <shortName evidence="1">OSB-CoA synthetase</shortName>
    </alternativeName>
</protein>
<proteinExistence type="inferred from homology"/>
<name>MENE_BACHK</name>
<comment type="function">
    <text evidence="1">Converts 2-succinylbenzoate (OSB) to 2-succinylbenzoyl-CoA (OSB-CoA).</text>
</comment>
<comment type="catalytic activity">
    <reaction evidence="1">
        <text>2-succinylbenzoate + ATP + CoA = 2-succinylbenzoyl-CoA + AMP + diphosphate</text>
        <dbReference type="Rhea" id="RHEA:17009"/>
        <dbReference type="ChEBI" id="CHEBI:18325"/>
        <dbReference type="ChEBI" id="CHEBI:30616"/>
        <dbReference type="ChEBI" id="CHEBI:33019"/>
        <dbReference type="ChEBI" id="CHEBI:57287"/>
        <dbReference type="ChEBI" id="CHEBI:57364"/>
        <dbReference type="ChEBI" id="CHEBI:456215"/>
        <dbReference type="EC" id="6.2.1.26"/>
    </reaction>
</comment>
<comment type="pathway">
    <text evidence="1">Quinol/quinone metabolism; 1,4-dihydroxy-2-naphthoate biosynthesis; 1,4-dihydroxy-2-naphthoate from chorismate: step 5/7.</text>
</comment>
<comment type="pathway">
    <text evidence="1">Quinol/quinone metabolism; menaquinone biosynthesis.</text>
</comment>
<comment type="similarity">
    <text evidence="1">Belongs to the ATP-dependent AMP-binding enzyme family. MenE subfamily.</text>
</comment>
<organism>
    <name type="scientific">Bacillus thuringiensis subsp. konkukian (strain 97-27)</name>
    <dbReference type="NCBI Taxonomy" id="281309"/>
    <lineage>
        <taxon>Bacteria</taxon>
        <taxon>Bacillati</taxon>
        <taxon>Bacillota</taxon>
        <taxon>Bacilli</taxon>
        <taxon>Bacillales</taxon>
        <taxon>Bacillaceae</taxon>
        <taxon>Bacillus</taxon>
        <taxon>Bacillus cereus group</taxon>
    </lineage>
</organism>
<keyword id="KW-0067">ATP-binding</keyword>
<keyword id="KW-0436">Ligase</keyword>
<keyword id="KW-0474">Menaquinone biosynthesis</keyword>
<keyword id="KW-0547">Nucleotide-binding</keyword>
<sequence>MMETMPNWLKQRAFLTPDRTAIEIEEEKVTFMQLHEKVVSVCEHLTHVGVKRGQKVAVLMKNGMEMITVIHALSYVGAVAVLLNTRLSREELLWQMDDAEVICLVTDQDFEAKDIPVYSFAEVMNGPKEEASIQEEFSLREAMTIIYTSGTTGKPKGVILTYGNHWASAVGSSLNLGLRDDDCWLACMPMFHVGGLSLLMKNIMYGMRILLVPKYDADFIHKALQTRGVTIISVVSKMLTDLLERLGEGTYPSSLRCMLLGGGPAPKPLLETCVDKGIPVYQTYGMTETSSQICTLSADYMLTKVGSAGKPLFQCQLRIEKDGVVVPPFAEGEIVVKGPNVTGGYFNREDATRETIQNGWLHTGDLGYLDEEGFLYVLDRRSDLIISGGENIYPAQIEEVLLSHPMVAEAGVVGMTDDKWGQVPAAFVVKSGEVTEEEILHFCEEKLAKYKVPKKACFLEELPRNASKKLLRRELRQLVEEM</sequence>
<feature type="chain" id="PRO_0000193158" description="2-succinylbenzoate--CoA ligase">
    <location>
        <begin position="1"/>
        <end position="482"/>
    </location>
</feature>
<evidence type="ECO:0000255" key="1">
    <source>
        <dbReference type="HAMAP-Rule" id="MF_00731"/>
    </source>
</evidence>
<gene>
    <name evidence="1" type="primary">menE</name>
    <name type="ordered locus">BT9727_4585</name>
</gene>
<reference key="1">
    <citation type="journal article" date="2006" name="J. Bacteriol.">
        <title>Pathogenomic sequence analysis of Bacillus cereus and Bacillus thuringiensis isolates closely related to Bacillus anthracis.</title>
        <authorList>
            <person name="Han C.S."/>
            <person name="Xie G."/>
            <person name="Challacombe J.F."/>
            <person name="Altherr M.R."/>
            <person name="Bhotika S.S."/>
            <person name="Bruce D."/>
            <person name="Campbell C.S."/>
            <person name="Campbell M.L."/>
            <person name="Chen J."/>
            <person name="Chertkov O."/>
            <person name="Cleland C."/>
            <person name="Dimitrijevic M."/>
            <person name="Doggett N.A."/>
            <person name="Fawcett J.J."/>
            <person name="Glavina T."/>
            <person name="Goodwin L.A."/>
            <person name="Hill K.K."/>
            <person name="Hitchcock P."/>
            <person name="Jackson P.J."/>
            <person name="Keim P."/>
            <person name="Kewalramani A.R."/>
            <person name="Longmire J."/>
            <person name="Lucas S."/>
            <person name="Malfatti S."/>
            <person name="McMurry K."/>
            <person name="Meincke L.J."/>
            <person name="Misra M."/>
            <person name="Moseman B.L."/>
            <person name="Mundt M."/>
            <person name="Munk A.C."/>
            <person name="Okinaka R.T."/>
            <person name="Parson-Quintana B."/>
            <person name="Reilly L.P."/>
            <person name="Richardson P."/>
            <person name="Robinson D.L."/>
            <person name="Rubin E."/>
            <person name="Saunders E."/>
            <person name="Tapia R."/>
            <person name="Tesmer J.G."/>
            <person name="Thayer N."/>
            <person name="Thompson L.S."/>
            <person name="Tice H."/>
            <person name="Ticknor L.O."/>
            <person name="Wills P.L."/>
            <person name="Brettin T.S."/>
            <person name="Gilna P."/>
        </authorList>
    </citation>
    <scope>NUCLEOTIDE SEQUENCE [LARGE SCALE GENOMIC DNA]</scope>
    <source>
        <strain>97-27</strain>
    </source>
</reference>